<proteinExistence type="inferred from homology"/>
<keyword id="KW-0963">Cytoplasm</keyword>
<keyword id="KW-0441">Lipid A biosynthesis</keyword>
<keyword id="KW-0444">Lipid biosynthesis</keyword>
<keyword id="KW-0443">Lipid metabolism</keyword>
<keyword id="KW-0456">Lyase</keyword>
<feature type="chain" id="PRO_1000197292" description="3-hydroxyacyl-[acyl-carrier-protein] dehydratase FabZ">
    <location>
        <begin position="1"/>
        <end position="149"/>
    </location>
</feature>
<feature type="active site" evidence="1">
    <location>
        <position position="52"/>
    </location>
</feature>
<accession>B3R2A6</accession>
<organism>
    <name type="scientific">Cupriavidus taiwanensis (strain DSM 17343 / BCRC 17206 / CCUG 44338 / CIP 107171 / LMG 19424 / R1)</name>
    <name type="common">Ralstonia taiwanensis (strain LMG 19424)</name>
    <dbReference type="NCBI Taxonomy" id="977880"/>
    <lineage>
        <taxon>Bacteria</taxon>
        <taxon>Pseudomonadati</taxon>
        <taxon>Pseudomonadota</taxon>
        <taxon>Betaproteobacteria</taxon>
        <taxon>Burkholderiales</taxon>
        <taxon>Burkholderiaceae</taxon>
        <taxon>Cupriavidus</taxon>
    </lineage>
</organism>
<sequence length="149" mass="17027">MSAAEIDIRKILKLLPHRYPFLLVDRVLEFEAQKRIKTLKNVTINEPYFQGHFPEQPVMPGVMILEALAQSAGLLTFGADMERKEGALYYFVGIDGARFKQVVYPGDQLHMNVTVERYIRGIWKFKAFATVDDKVACEAELMCTVKQAE</sequence>
<gene>
    <name evidence="1" type="primary">fabZ</name>
    <name type="ordered locus">RALTA_A1680</name>
</gene>
<dbReference type="EC" id="4.2.1.59" evidence="1"/>
<dbReference type="EMBL" id="CU633749">
    <property type="protein sequence ID" value="CAQ69623.1"/>
    <property type="molecule type" value="Genomic_DNA"/>
</dbReference>
<dbReference type="RefSeq" id="WP_010809590.1">
    <property type="nucleotide sequence ID" value="NC_010528.1"/>
</dbReference>
<dbReference type="SMR" id="B3R2A6"/>
<dbReference type="GeneID" id="29761318"/>
<dbReference type="KEGG" id="cti:RALTA_A1680"/>
<dbReference type="eggNOG" id="COG0764">
    <property type="taxonomic scope" value="Bacteria"/>
</dbReference>
<dbReference type="HOGENOM" id="CLU_078912_1_0_4"/>
<dbReference type="BioCyc" id="CTAI977880:RALTA_RS08075-MONOMER"/>
<dbReference type="Proteomes" id="UP000001692">
    <property type="component" value="Chromosome 1"/>
</dbReference>
<dbReference type="GO" id="GO:0005737">
    <property type="term" value="C:cytoplasm"/>
    <property type="evidence" value="ECO:0007669"/>
    <property type="project" value="UniProtKB-SubCell"/>
</dbReference>
<dbReference type="GO" id="GO:0016020">
    <property type="term" value="C:membrane"/>
    <property type="evidence" value="ECO:0007669"/>
    <property type="project" value="GOC"/>
</dbReference>
<dbReference type="GO" id="GO:0019171">
    <property type="term" value="F:(3R)-hydroxyacyl-[acyl-carrier-protein] dehydratase activity"/>
    <property type="evidence" value="ECO:0007669"/>
    <property type="project" value="UniProtKB-EC"/>
</dbReference>
<dbReference type="GO" id="GO:0006633">
    <property type="term" value="P:fatty acid biosynthetic process"/>
    <property type="evidence" value="ECO:0007669"/>
    <property type="project" value="UniProtKB-UniRule"/>
</dbReference>
<dbReference type="GO" id="GO:0009245">
    <property type="term" value="P:lipid A biosynthetic process"/>
    <property type="evidence" value="ECO:0007669"/>
    <property type="project" value="UniProtKB-UniRule"/>
</dbReference>
<dbReference type="CDD" id="cd01288">
    <property type="entry name" value="FabZ"/>
    <property type="match status" value="1"/>
</dbReference>
<dbReference type="FunFam" id="3.10.129.10:FF:000001">
    <property type="entry name" value="3-hydroxyacyl-[acyl-carrier-protein] dehydratase FabZ"/>
    <property type="match status" value="1"/>
</dbReference>
<dbReference type="Gene3D" id="3.10.129.10">
    <property type="entry name" value="Hotdog Thioesterase"/>
    <property type="match status" value="1"/>
</dbReference>
<dbReference type="HAMAP" id="MF_00406">
    <property type="entry name" value="FabZ"/>
    <property type="match status" value="1"/>
</dbReference>
<dbReference type="InterPro" id="IPR013114">
    <property type="entry name" value="FabA_FabZ"/>
</dbReference>
<dbReference type="InterPro" id="IPR010084">
    <property type="entry name" value="FabZ"/>
</dbReference>
<dbReference type="InterPro" id="IPR029069">
    <property type="entry name" value="HotDog_dom_sf"/>
</dbReference>
<dbReference type="NCBIfam" id="TIGR01750">
    <property type="entry name" value="fabZ"/>
    <property type="match status" value="1"/>
</dbReference>
<dbReference type="NCBIfam" id="NF000582">
    <property type="entry name" value="PRK00006.1"/>
    <property type="match status" value="1"/>
</dbReference>
<dbReference type="PANTHER" id="PTHR30272">
    <property type="entry name" value="3-HYDROXYACYL-[ACYL-CARRIER-PROTEIN] DEHYDRATASE"/>
    <property type="match status" value="1"/>
</dbReference>
<dbReference type="PANTHER" id="PTHR30272:SF1">
    <property type="entry name" value="3-HYDROXYACYL-[ACYL-CARRIER-PROTEIN] DEHYDRATASE"/>
    <property type="match status" value="1"/>
</dbReference>
<dbReference type="Pfam" id="PF07977">
    <property type="entry name" value="FabA"/>
    <property type="match status" value="1"/>
</dbReference>
<dbReference type="SUPFAM" id="SSF54637">
    <property type="entry name" value="Thioesterase/thiol ester dehydrase-isomerase"/>
    <property type="match status" value="1"/>
</dbReference>
<reference key="1">
    <citation type="journal article" date="2008" name="Genome Res.">
        <title>Genome sequence of the beta-rhizobium Cupriavidus taiwanensis and comparative genomics of rhizobia.</title>
        <authorList>
            <person name="Amadou C."/>
            <person name="Pascal G."/>
            <person name="Mangenot S."/>
            <person name="Glew M."/>
            <person name="Bontemps C."/>
            <person name="Capela D."/>
            <person name="Carrere S."/>
            <person name="Cruveiller S."/>
            <person name="Dossat C."/>
            <person name="Lajus A."/>
            <person name="Marchetti M."/>
            <person name="Poinsot V."/>
            <person name="Rouy Z."/>
            <person name="Servin B."/>
            <person name="Saad M."/>
            <person name="Schenowitz C."/>
            <person name="Barbe V."/>
            <person name="Batut J."/>
            <person name="Medigue C."/>
            <person name="Masson-Boivin C."/>
        </authorList>
    </citation>
    <scope>NUCLEOTIDE SEQUENCE [LARGE SCALE GENOMIC DNA]</scope>
    <source>
        <strain>DSM 17343 / BCRC 17206 / CCUG 44338 / CIP 107171 / LMG 19424 / R1</strain>
    </source>
</reference>
<protein>
    <recommendedName>
        <fullName evidence="1">3-hydroxyacyl-[acyl-carrier-protein] dehydratase FabZ</fullName>
        <ecNumber evidence="1">4.2.1.59</ecNumber>
    </recommendedName>
    <alternativeName>
        <fullName evidence="1">(3R)-hydroxymyristoyl-[acyl-carrier-protein] dehydratase</fullName>
        <shortName evidence="1">(3R)-hydroxymyristoyl-ACP dehydrase</shortName>
    </alternativeName>
    <alternativeName>
        <fullName evidence="1">Beta-hydroxyacyl-ACP dehydratase</fullName>
    </alternativeName>
</protein>
<comment type="function">
    <text evidence="1">Involved in unsaturated fatty acids biosynthesis. Catalyzes the dehydration of short chain beta-hydroxyacyl-ACPs and long chain saturated and unsaturated beta-hydroxyacyl-ACPs.</text>
</comment>
<comment type="catalytic activity">
    <reaction evidence="1">
        <text>a (3R)-hydroxyacyl-[ACP] = a (2E)-enoyl-[ACP] + H2O</text>
        <dbReference type="Rhea" id="RHEA:13097"/>
        <dbReference type="Rhea" id="RHEA-COMP:9925"/>
        <dbReference type="Rhea" id="RHEA-COMP:9945"/>
        <dbReference type="ChEBI" id="CHEBI:15377"/>
        <dbReference type="ChEBI" id="CHEBI:78784"/>
        <dbReference type="ChEBI" id="CHEBI:78827"/>
        <dbReference type="EC" id="4.2.1.59"/>
    </reaction>
</comment>
<comment type="subcellular location">
    <subcellularLocation>
        <location evidence="1">Cytoplasm</location>
    </subcellularLocation>
</comment>
<comment type="similarity">
    <text evidence="1">Belongs to the thioester dehydratase family. FabZ subfamily.</text>
</comment>
<evidence type="ECO:0000255" key="1">
    <source>
        <dbReference type="HAMAP-Rule" id="MF_00406"/>
    </source>
</evidence>
<name>FABZ_CUPTR</name>